<proteinExistence type="inferred from homology"/>
<organism>
    <name type="scientific">Aliivibrio fischeri (strain ATCC 700601 / ES114)</name>
    <name type="common">Vibrio fischeri</name>
    <dbReference type="NCBI Taxonomy" id="312309"/>
    <lineage>
        <taxon>Bacteria</taxon>
        <taxon>Pseudomonadati</taxon>
        <taxon>Pseudomonadota</taxon>
        <taxon>Gammaproteobacteria</taxon>
        <taxon>Vibrionales</taxon>
        <taxon>Vibrionaceae</taxon>
        <taxon>Aliivibrio</taxon>
    </lineage>
</organism>
<evidence type="ECO:0000255" key="1">
    <source>
        <dbReference type="HAMAP-Rule" id="MF_01175"/>
    </source>
</evidence>
<reference key="1">
    <citation type="journal article" date="2005" name="Proc. Natl. Acad. Sci. U.S.A.">
        <title>Complete genome sequence of Vibrio fischeri: a symbiotic bacterium with pathogenic congeners.</title>
        <authorList>
            <person name="Ruby E.G."/>
            <person name="Urbanowski M."/>
            <person name="Campbell J."/>
            <person name="Dunn A."/>
            <person name="Faini M."/>
            <person name="Gunsalus R."/>
            <person name="Lostroh P."/>
            <person name="Lupp C."/>
            <person name="McCann J."/>
            <person name="Millikan D."/>
            <person name="Schaefer A."/>
            <person name="Stabb E."/>
            <person name="Stevens A."/>
            <person name="Visick K."/>
            <person name="Whistler C."/>
            <person name="Greenberg E.P."/>
        </authorList>
    </citation>
    <scope>NUCLEOTIDE SEQUENCE [LARGE SCALE GENOMIC DNA]</scope>
    <source>
        <strain>ATCC 700601 / ES114</strain>
    </source>
</reference>
<accession>Q5E304</accession>
<gene>
    <name type="ordered locus">VF_2097</name>
</gene>
<name>YGFZ_ALIF1</name>
<feature type="chain" id="PRO_0000262904" description="tRNA-modifying protein YgfZ">
    <location>
        <begin position="1"/>
        <end position="318"/>
    </location>
</feature>
<feature type="binding site" evidence="1">
    <location>
        <position position="28"/>
    </location>
    <ligand>
        <name>folate</name>
        <dbReference type="ChEBI" id="CHEBI:62501"/>
    </ligand>
</feature>
<feature type="binding site" evidence="1">
    <location>
        <position position="182"/>
    </location>
    <ligand>
        <name>folate</name>
        <dbReference type="ChEBI" id="CHEBI:62501"/>
    </ligand>
</feature>
<dbReference type="EMBL" id="CP000020">
    <property type="protein sequence ID" value="AAW86592.1"/>
    <property type="molecule type" value="Genomic_DNA"/>
</dbReference>
<dbReference type="RefSeq" id="WP_011262556.1">
    <property type="nucleotide sequence ID" value="NC_006840.2"/>
</dbReference>
<dbReference type="RefSeq" id="YP_205480.1">
    <property type="nucleotide sequence ID" value="NC_006840.2"/>
</dbReference>
<dbReference type="SMR" id="Q5E304"/>
<dbReference type="STRING" id="312309.VF_2097"/>
<dbReference type="EnsemblBacteria" id="AAW86592">
    <property type="protein sequence ID" value="AAW86592"/>
    <property type="gene ID" value="VF_2097"/>
</dbReference>
<dbReference type="GeneID" id="54164802"/>
<dbReference type="KEGG" id="vfi:VF_2097"/>
<dbReference type="PATRIC" id="fig|312309.11.peg.2139"/>
<dbReference type="eggNOG" id="COG0354">
    <property type="taxonomic scope" value="Bacteria"/>
</dbReference>
<dbReference type="HOGENOM" id="CLU_007884_6_1_6"/>
<dbReference type="OrthoDB" id="9796287at2"/>
<dbReference type="Proteomes" id="UP000000537">
    <property type="component" value="Chromosome I"/>
</dbReference>
<dbReference type="GO" id="GO:0005737">
    <property type="term" value="C:cytoplasm"/>
    <property type="evidence" value="ECO:0007669"/>
    <property type="project" value="UniProtKB-SubCell"/>
</dbReference>
<dbReference type="GO" id="GO:0005542">
    <property type="term" value="F:folic acid binding"/>
    <property type="evidence" value="ECO:0007669"/>
    <property type="project" value="UniProtKB-UniRule"/>
</dbReference>
<dbReference type="GO" id="GO:0016226">
    <property type="term" value="P:iron-sulfur cluster assembly"/>
    <property type="evidence" value="ECO:0007669"/>
    <property type="project" value="TreeGrafter"/>
</dbReference>
<dbReference type="GO" id="GO:0009451">
    <property type="term" value="P:RNA modification"/>
    <property type="evidence" value="ECO:0007669"/>
    <property type="project" value="InterPro"/>
</dbReference>
<dbReference type="GO" id="GO:0008033">
    <property type="term" value="P:tRNA processing"/>
    <property type="evidence" value="ECO:0007669"/>
    <property type="project" value="UniProtKB-UniRule"/>
</dbReference>
<dbReference type="FunFam" id="3.30.70.1400:FF:000002">
    <property type="entry name" value="tRNA-modifying protein YgfZ"/>
    <property type="match status" value="1"/>
</dbReference>
<dbReference type="Gene3D" id="2.40.30.160">
    <property type="match status" value="1"/>
</dbReference>
<dbReference type="Gene3D" id="3.30.70.1630">
    <property type="match status" value="1"/>
</dbReference>
<dbReference type="Gene3D" id="3.30.70.1400">
    <property type="entry name" value="Aminomethyltransferase beta-barrel domains"/>
    <property type="match status" value="1"/>
</dbReference>
<dbReference type="HAMAP" id="MF_01175">
    <property type="entry name" value="tRNA_modifying_YgfZ"/>
    <property type="match status" value="1"/>
</dbReference>
<dbReference type="InterPro" id="IPR029043">
    <property type="entry name" value="GcvT/YgfZ_C"/>
</dbReference>
<dbReference type="InterPro" id="IPR023758">
    <property type="entry name" value="tRNA-modifying_YgfZ"/>
</dbReference>
<dbReference type="InterPro" id="IPR045179">
    <property type="entry name" value="YgfZ/GcvT"/>
</dbReference>
<dbReference type="InterPro" id="IPR017703">
    <property type="entry name" value="YgfZ/GcvT_CS"/>
</dbReference>
<dbReference type="InterPro" id="IPR048451">
    <property type="entry name" value="YgfZ_barrel"/>
</dbReference>
<dbReference type="NCBIfam" id="NF007110">
    <property type="entry name" value="PRK09559.1"/>
    <property type="match status" value="1"/>
</dbReference>
<dbReference type="NCBIfam" id="TIGR03317">
    <property type="entry name" value="ygfZ_signature"/>
    <property type="match status" value="1"/>
</dbReference>
<dbReference type="PANTHER" id="PTHR22602">
    <property type="entry name" value="TRANSFERASE CAF17, MITOCHONDRIAL-RELATED"/>
    <property type="match status" value="1"/>
</dbReference>
<dbReference type="PANTHER" id="PTHR22602:SF0">
    <property type="entry name" value="TRANSFERASE CAF17, MITOCHONDRIAL-RELATED"/>
    <property type="match status" value="1"/>
</dbReference>
<dbReference type="Pfam" id="PF21130">
    <property type="entry name" value="YgfZ_barrel"/>
    <property type="match status" value="1"/>
</dbReference>
<dbReference type="SUPFAM" id="SSF101790">
    <property type="entry name" value="Aminomethyltransferase beta-barrel domain"/>
    <property type="match status" value="1"/>
</dbReference>
<dbReference type="SUPFAM" id="SSF103025">
    <property type="entry name" value="Folate-binding domain"/>
    <property type="match status" value="1"/>
</dbReference>
<sequence length="318" mass="35589">MMSTLFPALNLNKDEPLPSFTVSELNDWALITMIGADKKSYLQGQVTCDVVSLAQDEITFGGHCDAKGKLWSIFQLFHHNDGYALFQRKSAIETELTEIKKYAVFSKVDISISDEILLGFTGDKALEWINQHTDSNANVRVSKFGTFAKVSDTQWLLVTTDDKKEELLSLLSEATLCDEAIWSLHHIKHALPQIDAPLCNEHIPQALNLQAINGISFKKGCYTGQETVARAKYRGINKRAMYLLSGLSEARPCAGDAIERSVGENWRKGGTIVSAYRFEDGHTLALAILPNDLDEDTQFKLQESIWEKVELPYSLNDE</sequence>
<protein>
    <recommendedName>
        <fullName evidence="1">tRNA-modifying protein YgfZ</fullName>
    </recommendedName>
</protein>
<keyword id="KW-0963">Cytoplasm</keyword>
<keyword id="KW-0290">Folate-binding</keyword>
<keyword id="KW-1185">Reference proteome</keyword>
<keyword id="KW-0819">tRNA processing</keyword>
<comment type="function">
    <text evidence="1">Folate-binding protein involved in regulating the level of ATP-DnaA and in the modification of some tRNAs. It is probably a key factor in regulatory networks that act via tRNA modification, such as initiation of chromosomal replication.</text>
</comment>
<comment type="subcellular location">
    <subcellularLocation>
        <location evidence="1">Cytoplasm</location>
    </subcellularLocation>
</comment>
<comment type="similarity">
    <text evidence="1">Belongs to the tRNA-modifying YgfZ family.</text>
</comment>